<reference key="1">
    <citation type="journal article" date="2005" name="J. Bacteriol.">
        <title>Whole-genome sequence analysis of Pseudomonas syringae pv. phaseolicola 1448A reveals divergence among pathovars in genes involved in virulence and transposition.</title>
        <authorList>
            <person name="Joardar V."/>
            <person name="Lindeberg M."/>
            <person name="Jackson R.W."/>
            <person name="Selengut J."/>
            <person name="Dodson R."/>
            <person name="Brinkac L.M."/>
            <person name="Daugherty S.C."/>
            <person name="DeBoy R.T."/>
            <person name="Durkin A.S."/>
            <person name="Gwinn Giglio M."/>
            <person name="Madupu R."/>
            <person name="Nelson W.C."/>
            <person name="Rosovitz M.J."/>
            <person name="Sullivan S.A."/>
            <person name="Crabtree J."/>
            <person name="Creasy T."/>
            <person name="Davidsen T.M."/>
            <person name="Haft D.H."/>
            <person name="Zafar N."/>
            <person name="Zhou L."/>
            <person name="Halpin R."/>
            <person name="Holley T."/>
            <person name="Khouri H.M."/>
            <person name="Feldblyum T.V."/>
            <person name="White O."/>
            <person name="Fraser C.M."/>
            <person name="Chatterjee A.K."/>
            <person name="Cartinhour S."/>
            <person name="Schneider D."/>
            <person name="Mansfield J.W."/>
            <person name="Collmer A."/>
            <person name="Buell R."/>
        </authorList>
    </citation>
    <scope>NUCLEOTIDE SEQUENCE [LARGE SCALE GENOMIC DNA]</scope>
    <source>
        <strain>1448A / Race 6</strain>
    </source>
</reference>
<name>SYGB_PSE14</name>
<feature type="chain" id="PRO_1000006385" description="Glycine--tRNA ligase beta subunit">
    <location>
        <begin position="1"/>
        <end position="684"/>
    </location>
</feature>
<proteinExistence type="inferred from homology"/>
<gene>
    <name evidence="1" type="primary">glyS</name>
    <name type="ordered locus">PSPPH_0011</name>
</gene>
<keyword id="KW-0030">Aminoacyl-tRNA synthetase</keyword>
<keyword id="KW-0067">ATP-binding</keyword>
<keyword id="KW-0963">Cytoplasm</keyword>
<keyword id="KW-0436">Ligase</keyword>
<keyword id="KW-0547">Nucleotide-binding</keyword>
<keyword id="KW-0648">Protein biosynthesis</keyword>
<sequence>MSAQDFLVELGTEELPPKTLVSLADAFLAGIEKGLSGAGLTYSAKQVYAAPRRLAVLITALATQQPDRSVNLDGPPRQAAFDADGNPTQAALGFAKKCGVDLSEIDQSGPKLRYSQTILGKPTTSLLPTIVEDSLNDLPIAKRMRWGARKEEFVRPTQWLVMLFGDQVVDCTILAQSAGRHSRGHRFHHPQDVRISSPAGYLSDLRAAHVLADFNERRQIISKRVDELATQQEGTAIVPPSLLDEVAGLVEWPVPLVCSFEERFLEVPQEALITTMQDNQKYFCLLDAEGKLLPRFITVANIESKDPAQIVAGNEKVVRPRLTDAEFFFKQDKKQKLETFNDRLKNVVFQAQLGSVFDKAERVSKLAAYIAPRIGGDAQRAARAGLLSKCDLSSEMVGEFPEMQGIAGYYYAKADGEPEDVALALNEQYMPRGAGAELPTTLTGAAVAIADKLDTLVGIFGIGMLPTGSKDPYALRRAALGILRILIEKKLDLNLVETVKFAVTQFGAKIKPAGLAEQVLDFIFDRLRARYEDEGVDVAVYLSVRALQPASALDFDQRVQAVQAFRKLPQAAALAAVNKRVSNLLSKAEGSIAQTVEPKYFDNANEFSLYSAIQQADHAVQPMAAERQYSESLARLAMLREPVDAFFEAVMVNAEDANVRANRYALLSRLRGLFLGVADISLLG</sequence>
<comment type="catalytic activity">
    <reaction evidence="1">
        <text>tRNA(Gly) + glycine + ATP = glycyl-tRNA(Gly) + AMP + diphosphate</text>
        <dbReference type="Rhea" id="RHEA:16013"/>
        <dbReference type="Rhea" id="RHEA-COMP:9664"/>
        <dbReference type="Rhea" id="RHEA-COMP:9683"/>
        <dbReference type="ChEBI" id="CHEBI:30616"/>
        <dbReference type="ChEBI" id="CHEBI:33019"/>
        <dbReference type="ChEBI" id="CHEBI:57305"/>
        <dbReference type="ChEBI" id="CHEBI:78442"/>
        <dbReference type="ChEBI" id="CHEBI:78522"/>
        <dbReference type="ChEBI" id="CHEBI:456215"/>
        <dbReference type="EC" id="6.1.1.14"/>
    </reaction>
</comment>
<comment type="subunit">
    <text evidence="1">Tetramer of two alpha and two beta subunits.</text>
</comment>
<comment type="subcellular location">
    <subcellularLocation>
        <location evidence="1">Cytoplasm</location>
    </subcellularLocation>
</comment>
<comment type="similarity">
    <text evidence="1">Belongs to the class-II aminoacyl-tRNA synthetase family.</text>
</comment>
<evidence type="ECO:0000255" key="1">
    <source>
        <dbReference type="HAMAP-Rule" id="MF_00255"/>
    </source>
</evidence>
<dbReference type="EC" id="6.1.1.14" evidence="1"/>
<dbReference type="EMBL" id="CP000058">
    <property type="protein sequence ID" value="AAZ36340.1"/>
    <property type="molecule type" value="Genomic_DNA"/>
</dbReference>
<dbReference type="RefSeq" id="WP_002551325.1">
    <property type="nucleotide sequence ID" value="NC_005773.3"/>
</dbReference>
<dbReference type="SMR" id="Q48QJ1"/>
<dbReference type="GeneID" id="61872715"/>
<dbReference type="KEGG" id="psp:PSPPH_0011"/>
<dbReference type="eggNOG" id="COG0751">
    <property type="taxonomic scope" value="Bacteria"/>
</dbReference>
<dbReference type="HOGENOM" id="CLU_007220_2_2_6"/>
<dbReference type="Proteomes" id="UP000000551">
    <property type="component" value="Chromosome"/>
</dbReference>
<dbReference type="GO" id="GO:0005829">
    <property type="term" value="C:cytosol"/>
    <property type="evidence" value="ECO:0007669"/>
    <property type="project" value="TreeGrafter"/>
</dbReference>
<dbReference type="GO" id="GO:0004814">
    <property type="term" value="F:arginine-tRNA ligase activity"/>
    <property type="evidence" value="ECO:0007669"/>
    <property type="project" value="InterPro"/>
</dbReference>
<dbReference type="GO" id="GO:0005524">
    <property type="term" value="F:ATP binding"/>
    <property type="evidence" value="ECO:0007669"/>
    <property type="project" value="UniProtKB-UniRule"/>
</dbReference>
<dbReference type="GO" id="GO:0004820">
    <property type="term" value="F:glycine-tRNA ligase activity"/>
    <property type="evidence" value="ECO:0007669"/>
    <property type="project" value="UniProtKB-UniRule"/>
</dbReference>
<dbReference type="GO" id="GO:0006420">
    <property type="term" value="P:arginyl-tRNA aminoacylation"/>
    <property type="evidence" value="ECO:0007669"/>
    <property type="project" value="InterPro"/>
</dbReference>
<dbReference type="GO" id="GO:0006426">
    <property type="term" value="P:glycyl-tRNA aminoacylation"/>
    <property type="evidence" value="ECO:0007669"/>
    <property type="project" value="UniProtKB-UniRule"/>
</dbReference>
<dbReference type="HAMAP" id="MF_00255">
    <property type="entry name" value="Gly_tRNA_synth_beta"/>
    <property type="match status" value="1"/>
</dbReference>
<dbReference type="InterPro" id="IPR008909">
    <property type="entry name" value="DALR_anticod-bd"/>
</dbReference>
<dbReference type="InterPro" id="IPR015944">
    <property type="entry name" value="Gly-tRNA-synth_bsu"/>
</dbReference>
<dbReference type="InterPro" id="IPR006194">
    <property type="entry name" value="Gly-tRNA-synth_heterodimer"/>
</dbReference>
<dbReference type="NCBIfam" id="TIGR00211">
    <property type="entry name" value="glyS"/>
    <property type="match status" value="1"/>
</dbReference>
<dbReference type="PANTHER" id="PTHR30075:SF2">
    <property type="entry name" value="GLYCINE--TRNA LIGASE, CHLOROPLASTIC_MITOCHONDRIAL 2"/>
    <property type="match status" value="1"/>
</dbReference>
<dbReference type="PANTHER" id="PTHR30075">
    <property type="entry name" value="GLYCYL-TRNA SYNTHETASE"/>
    <property type="match status" value="1"/>
</dbReference>
<dbReference type="Pfam" id="PF05746">
    <property type="entry name" value="DALR_1"/>
    <property type="match status" value="1"/>
</dbReference>
<dbReference type="Pfam" id="PF02092">
    <property type="entry name" value="tRNA_synt_2f"/>
    <property type="match status" value="1"/>
</dbReference>
<dbReference type="PRINTS" id="PR01045">
    <property type="entry name" value="TRNASYNTHGB"/>
</dbReference>
<dbReference type="SUPFAM" id="SSF109604">
    <property type="entry name" value="HD-domain/PDEase-like"/>
    <property type="match status" value="1"/>
</dbReference>
<dbReference type="PROSITE" id="PS50861">
    <property type="entry name" value="AA_TRNA_LIGASE_II_GLYAB"/>
    <property type="match status" value="1"/>
</dbReference>
<accession>Q48QJ1</accession>
<organism>
    <name type="scientific">Pseudomonas savastanoi pv. phaseolicola (strain 1448A / Race 6)</name>
    <name type="common">Pseudomonas syringae pv. phaseolicola (strain 1448A / Race 6)</name>
    <dbReference type="NCBI Taxonomy" id="264730"/>
    <lineage>
        <taxon>Bacteria</taxon>
        <taxon>Pseudomonadati</taxon>
        <taxon>Pseudomonadota</taxon>
        <taxon>Gammaproteobacteria</taxon>
        <taxon>Pseudomonadales</taxon>
        <taxon>Pseudomonadaceae</taxon>
        <taxon>Pseudomonas</taxon>
    </lineage>
</organism>
<protein>
    <recommendedName>
        <fullName evidence="1">Glycine--tRNA ligase beta subunit</fullName>
        <ecNumber evidence="1">6.1.1.14</ecNumber>
    </recommendedName>
    <alternativeName>
        <fullName evidence="1">Glycyl-tRNA synthetase beta subunit</fullName>
        <shortName evidence="1">GlyRS</shortName>
    </alternativeName>
</protein>